<reference key="1">
    <citation type="journal article" date="2004" name="Nat. Genet.">
        <title>Comparison of genome degradation in Paratyphi A and Typhi, human-restricted serovars of Salmonella enterica that cause typhoid.</title>
        <authorList>
            <person name="McClelland M."/>
            <person name="Sanderson K.E."/>
            <person name="Clifton S.W."/>
            <person name="Latreille P."/>
            <person name="Porwollik S."/>
            <person name="Sabo A."/>
            <person name="Meyer R."/>
            <person name="Bieri T."/>
            <person name="Ozersky P."/>
            <person name="McLellan M."/>
            <person name="Harkins C.R."/>
            <person name="Wang C."/>
            <person name="Nguyen C."/>
            <person name="Berghoff A."/>
            <person name="Elliott G."/>
            <person name="Kohlberg S."/>
            <person name="Strong C."/>
            <person name="Du F."/>
            <person name="Carter J."/>
            <person name="Kremizki C."/>
            <person name="Layman D."/>
            <person name="Leonard S."/>
            <person name="Sun H."/>
            <person name="Fulton L."/>
            <person name="Nash W."/>
            <person name="Miner T."/>
            <person name="Minx P."/>
            <person name="Delehaunty K."/>
            <person name="Fronick C."/>
            <person name="Magrini V."/>
            <person name="Nhan M."/>
            <person name="Warren W."/>
            <person name="Florea L."/>
            <person name="Spieth J."/>
            <person name="Wilson R.K."/>
        </authorList>
    </citation>
    <scope>NUCLEOTIDE SEQUENCE [LARGE SCALE GENOMIC DNA]</scope>
    <source>
        <strain>ATCC 9150 / SARB42</strain>
    </source>
</reference>
<sequence>MDTSRLTLDHFLSRFQLLRPQITHETLNQRQAAVLIPVVRRPQPGLLLTQRAIHLRKHAGQVAFPGGAVDSTDASLIAAALREAQEEVAIPPQAVEVIGVLPPVDSVTGFQVTPVVGIIPPNLPWRASEDEVSAVFEMPLAQALQLGRYHPLDVYRRGNSHRVWLSWYEHYFVWGMTANILRELALQIGVKP</sequence>
<protein>
    <recommendedName>
        <fullName evidence="1">Uncharacterized Nudix hydrolase NudL</fullName>
        <ecNumber evidence="1">3.6.1.-</ecNumber>
    </recommendedName>
</protein>
<dbReference type="EC" id="3.6.1.-" evidence="1"/>
<dbReference type="EMBL" id="CP000026">
    <property type="protein sequence ID" value="AAV77019.1"/>
    <property type="molecule type" value="Genomic_DNA"/>
</dbReference>
<dbReference type="RefSeq" id="WP_000381531.1">
    <property type="nucleotide sequence ID" value="NC_006511.1"/>
</dbReference>
<dbReference type="SMR" id="Q5PNL9"/>
<dbReference type="KEGG" id="spt:SPA1048"/>
<dbReference type="HOGENOM" id="CLU_040940_5_2_6"/>
<dbReference type="Proteomes" id="UP000008185">
    <property type="component" value="Chromosome"/>
</dbReference>
<dbReference type="GO" id="GO:0010945">
    <property type="term" value="F:coenzyme A diphosphatase activity"/>
    <property type="evidence" value="ECO:0007669"/>
    <property type="project" value="InterPro"/>
</dbReference>
<dbReference type="GO" id="GO:0000287">
    <property type="term" value="F:magnesium ion binding"/>
    <property type="evidence" value="ECO:0007669"/>
    <property type="project" value="UniProtKB-UniRule"/>
</dbReference>
<dbReference type="GO" id="GO:0030145">
    <property type="term" value="F:manganese ion binding"/>
    <property type="evidence" value="ECO:0007669"/>
    <property type="project" value="UniProtKB-UniRule"/>
</dbReference>
<dbReference type="GO" id="GO:0009132">
    <property type="term" value="P:nucleoside diphosphate metabolic process"/>
    <property type="evidence" value="ECO:0007669"/>
    <property type="project" value="InterPro"/>
</dbReference>
<dbReference type="CDD" id="cd03426">
    <property type="entry name" value="NUDIX_CoAse_Nudt7"/>
    <property type="match status" value="1"/>
</dbReference>
<dbReference type="Gene3D" id="3.90.79.10">
    <property type="entry name" value="Nucleoside Triphosphate Pyrophosphohydrolase"/>
    <property type="match status" value="1"/>
</dbReference>
<dbReference type="HAMAP" id="MF_01592">
    <property type="entry name" value="Nudix_NudL"/>
    <property type="match status" value="1"/>
</dbReference>
<dbReference type="InterPro" id="IPR045121">
    <property type="entry name" value="CoAse"/>
</dbReference>
<dbReference type="InterPro" id="IPR015797">
    <property type="entry name" value="NUDIX_hydrolase-like_dom_sf"/>
</dbReference>
<dbReference type="InterPro" id="IPR000086">
    <property type="entry name" value="NUDIX_hydrolase_dom"/>
</dbReference>
<dbReference type="InterPro" id="IPR000059">
    <property type="entry name" value="NUDIX_hydrolase_NudL_CS"/>
</dbReference>
<dbReference type="InterPro" id="IPR023735">
    <property type="entry name" value="Nudix_NudL"/>
</dbReference>
<dbReference type="NCBIfam" id="NF007980">
    <property type="entry name" value="PRK10707.1"/>
    <property type="match status" value="1"/>
</dbReference>
<dbReference type="PANTHER" id="PTHR12992:SF11">
    <property type="entry name" value="MITOCHONDRIAL COENZYME A DIPHOSPHATASE NUDT8"/>
    <property type="match status" value="1"/>
</dbReference>
<dbReference type="PANTHER" id="PTHR12992">
    <property type="entry name" value="NUDIX HYDROLASE"/>
    <property type="match status" value="1"/>
</dbReference>
<dbReference type="Pfam" id="PF00293">
    <property type="entry name" value="NUDIX"/>
    <property type="match status" value="1"/>
</dbReference>
<dbReference type="SUPFAM" id="SSF55811">
    <property type="entry name" value="Nudix"/>
    <property type="match status" value="1"/>
</dbReference>
<dbReference type="PROSITE" id="PS51462">
    <property type="entry name" value="NUDIX"/>
    <property type="match status" value="1"/>
</dbReference>
<dbReference type="PROSITE" id="PS01293">
    <property type="entry name" value="NUDIX_COA"/>
    <property type="match status" value="1"/>
</dbReference>
<accession>Q5PNL9</accession>
<feature type="chain" id="PRO_0000315582" description="Uncharacterized Nudix hydrolase NudL">
    <location>
        <begin position="1"/>
        <end position="192"/>
    </location>
</feature>
<feature type="domain" description="Nudix hydrolase" evidence="1">
    <location>
        <begin position="29"/>
        <end position="160"/>
    </location>
</feature>
<feature type="short sequence motif" description="Nudix box">
    <location>
        <begin position="67"/>
        <end position="89"/>
    </location>
</feature>
<feature type="binding site" evidence="1">
    <location>
        <position position="83"/>
    </location>
    <ligand>
        <name>Mg(2+)</name>
        <dbReference type="ChEBI" id="CHEBI:18420"/>
    </ligand>
</feature>
<feature type="binding site" evidence="1">
    <location>
        <position position="87"/>
    </location>
    <ligand>
        <name>Mg(2+)</name>
        <dbReference type="ChEBI" id="CHEBI:18420"/>
    </ligand>
</feature>
<organism>
    <name type="scientific">Salmonella paratyphi A (strain ATCC 9150 / SARB42)</name>
    <dbReference type="NCBI Taxonomy" id="295319"/>
    <lineage>
        <taxon>Bacteria</taxon>
        <taxon>Pseudomonadati</taxon>
        <taxon>Pseudomonadota</taxon>
        <taxon>Gammaproteobacteria</taxon>
        <taxon>Enterobacterales</taxon>
        <taxon>Enterobacteriaceae</taxon>
        <taxon>Salmonella</taxon>
    </lineage>
</organism>
<gene>
    <name evidence="1" type="primary">nudL</name>
    <name type="ordered locus">SPA1048</name>
</gene>
<name>NUDL_SALPA</name>
<evidence type="ECO:0000255" key="1">
    <source>
        <dbReference type="HAMAP-Rule" id="MF_01592"/>
    </source>
</evidence>
<keyword id="KW-0378">Hydrolase</keyword>
<keyword id="KW-0460">Magnesium</keyword>
<keyword id="KW-0464">Manganese</keyword>
<keyword id="KW-0479">Metal-binding</keyword>
<comment type="function">
    <text evidence="1">Probably mediates the hydrolysis of some nucleoside diphosphate derivatives.</text>
</comment>
<comment type="cofactor">
    <cofactor evidence="1">
        <name>Mn(2+)</name>
        <dbReference type="ChEBI" id="CHEBI:29035"/>
    </cofactor>
    <cofactor evidence="1">
        <name>Mg(2+)</name>
        <dbReference type="ChEBI" id="CHEBI:18420"/>
    </cofactor>
</comment>
<comment type="similarity">
    <text evidence="1">Belongs to the Nudix hydrolase family. PCD1 subfamily.</text>
</comment>
<proteinExistence type="inferred from homology"/>